<feature type="chain" id="PRO_0000212755" description="Putative disease resistance protein At4g10780">
    <location>
        <begin position="1"/>
        <end position="892"/>
    </location>
</feature>
<feature type="domain" description="NB-ARC">
    <location>
        <begin position="137"/>
        <end position="440"/>
    </location>
</feature>
<feature type="repeat" description="LRR 1">
    <location>
        <begin position="515"/>
        <end position="536"/>
    </location>
</feature>
<feature type="repeat" description="LRR 2">
    <location>
        <begin position="537"/>
        <end position="559"/>
    </location>
</feature>
<feature type="repeat" description="LRR 3">
    <location>
        <begin position="562"/>
        <end position="584"/>
    </location>
</feature>
<feature type="repeat" description="LRR 4">
    <location>
        <begin position="586"/>
        <end position="608"/>
    </location>
</feature>
<feature type="repeat" description="LRR 5">
    <location>
        <begin position="609"/>
        <end position="631"/>
    </location>
</feature>
<feature type="repeat" description="LRR 6">
    <location>
        <begin position="632"/>
        <end position="654"/>
    </location>
</feature>
<feature type="coiled-coil region" evidence="2">
    <location>
        <begin position="24"/>
        <end position="63"/>
    </location>
</feature>
<feature type="binding site" evidence="2">
    <location>
        <begin position="180"/>
        <end position="187"/>
    </location>
    <ligand>
        <name>ATP</name>
        <dbReference type="ChEBI" id="CHEBI:30616"/>
    </ligand>
</feature>
<organism>
    <name type="scientific">Arabidopsis thaliana</name>
    <name type="common">Mouse-ear cress</name>
    <dbReference type="NCBI Taxonomy" id="3702"/>
    <lineage>
        <taxon>Eukaryota</taxon>
        <taxon>Viridiplantae</taxon>
        <taxon>Streptophyta</taxon>
        <taxon>Embryophyta</taxon>
        <taxon>Tracheophyta</taxon>
        <taxon>Spermatophyta</taxon>
        <taxon>Magnoliopsida</taxon>
        <taxon>eudicotyledons</taxon>
        <taxon>Gunneridae</taxon>
        <taxon>Pentapetalae</taxon>
        <taxon>rosids</taxon>
        <taxon>malvids</taxon>
        <taxon>Brassicales</taxon>
        <taxon>Brassicaceae</taxon>
        <taxon>Camelineae</taxon>
        <taxon>Arabidopsis</taxon>
    </lineage>
</organism>
<evidence type="ECO:0000250" key="1"/>
<evidence type="ECO:0000255" key="2"/>
<evidence type="ECO:0000305" key="3"/>
<name>DRL23_ARATH</name>
<keyword id="KW-0067">ATP-binding</keyword>
<keyword id="KW-0175">Coiled coil</keyword>
<keyword id="KW-0433">Leucine-rich repeat</keyword>
<keyword id="KW-0547">Nucleotide-binding</keyword>
<keyword id="KW-0611">Plant defense</keyword>
<keyword id="KW-1185">Reference proteome</keyword>
<keyword id="KW-0677">Repeat</keyword>
<dbReference type="EMBL" id="AF080119">
    <property type="protein sequence ID" value="AAC35528.1"/>
    <property type="molecule type" value="Genomic_DNA"/>
</dbReference>
<dbReference type="EMBL" id="AL161518">
    <property type="protein sequence ID" value="CAB81179.1"/>
    <property type="molecule type" value="Genomic_DNA"/>
</dbReference>
<dbReference type="EMBL" id="CP002687">
    <property type="protein sequence ID" value="AEE82928.1"/>
    <property type="molecule type" value="Genomic_DNA"/>
</dbReference>
<dbReference type="PIR" id="T01899">
    <property type="entry name" value="T01899"/>
</dbReference>
<dbReference type="RefSeq" id="NP_192816.1">
    <property type="nucleotide sequence ID" value="NM_117146.1"/>
</dbReference>
<dbReference type="SMR" id="O82484"/>
<dbReference type="BioGRID" id="11973">
    <property type="interactions" value="1"/>
</dbReference>
<dbReference type="STRING" id="3702.O82484"/>
<dbReference type="iPTMnet" id="O82484"/>
<dbReference type="PaxDb" id="3702-AT4G10780.1"/>
<dbReference type="EnsemblPlants" id="AT4G10780.1">
    <property type="protein sequence ID" value="AT4G10780.1"/>
    <property type="gene ID" value="AT4G10780"/>
</dbReference>
<dbReference type="GeneID" id="826674"/>
<dbReference type="Gramene" id="AT4G10780.1">
    <property type="protein sequence ID" value="AT4G10780.1"/>
    <property type="gene ID" value="AT4G10780"/>
</dbReference>
<dbReference type="KEGG" id="ath:AT4G10780"/>
<dbReference type="Araport" id="AT4G10780"/>
<dbReference type="TAIR" id="AT4G10780"/>
<dbReference type="eggNOG" id="KOG4658">
    <property type="taxonomic scope" value="Eukaryota"/>
</dbReference>
<dbReference type="HOGENOM" id="CLU_000427_4_0_1"/>
<dbReference type="InParanoid" id="O82484"/>
<dbReference type="PhylomeDB" id="O82484"/>
<dbReference type="PRO" id="PR:O82484"/>
<dbReference type="Proteomes" id="UP000006548">
    <property type="component" value="Chromosome 4"/>
</dbReference>
<dbReference type="ExpressionAtlas" id="O82484">
    <property type="expression patterns" value="baseline and differential"/>
</dbReference>
<dbReference type="GO" id="GO:0043531">
    <property type="term" value="F:ADP binding"/>
    <property type="evidence" value="ECO:0007669"/>
    <property type="project" value="InterPro"/>
</dbReference>
<dbReference type="GO" id="GO:0005524">
    <property type="term" value="F:ATP binding"/>
    <property type="evidence" value="ECO:0007669"/>
    <property type="project" value="UniProtKB-KW"/>
</dbReference>
<dbReference type="GO" id="GO:0006952">
    <property type="term" value="P:defense response"/>
    <property type="evidence" value="ECO:0007669"/>
    <property type="project" value="UniProtKB-KW"/>
</dbReference>
<dbReference type="FunFam" id="3.80.10.10:FF:000834">
    <property type="entry name" value="Probable disease resistance protein At1g15890"/>
    <property type="match status" value="1"/>
</dbReference>
<dbReference type="FunFam" id="3.40.50.300:FF:001091">
    <property type="entry name" value="Probable disease resistance protein At1g61300"/>
    <property type="match status" value="1"/>
</dbReference>
<dbReference type="FunFam" id="1.10.10.10:FF:000322">
    <property type="entry name" value="Probable disease resistance protein At1g63360"/>
    <property type="match status" value="1"/>
</dbReference>
<dbReference type="FunFam" id="1.10.8.430:FF:000003">
    <property type="entry name" value="Probable disease resistance protein At5g66910"/>
    <property type="match status" value="1"/>
</dbReference>
<dbReference type="Gene3D" id="1.10.8.430">
    <property type="entry name" value="Helical domain of apoptotic protease-activating factors"/>
    <property type="match status" value="1"/>
</dbReference>
<dbReference type="Gene3D" id="3.40.50.300">
    <property type="entry name" value="P-loop containing nucleotide triphosphate hydrolases"/>
    <property type="match status" value="1"/>
</dbReference>
<dbReference type="Gene3D" id="3.80.10.10">
    <property type="entry name" value="Ribonuclease Inhibitor"/>
    <property type="match status" value="1"/>
</dbReference>
<dbReference type="Gene3D" id="1.10.10.10">
    <property type="entry name" value="Winged helix-like DNA-binding domain superfamily/Winged helix DNA-binding domain"/>
    <property type="match status" value="1"/>
</dbReference>
<dbReference type="InterPro" id="IPR042197">
    <property type="entry name" value="Apaf_helical"/>
</dbReference>
<dbReference type="InterPro" id="IPR032675">
    <property type="entry name" value="LRR_dom_sf"/>
</dbReference>
<dbReference type="InterPro" id="IPR055414">
    <property type="entry name" value="LRR_R13L4/SHOC2-like"/>
</dbReference>
<dbReference type="InterPro" id="IPR002182">
    <property type="entry name" value="NB-ARC"/>
</dbReference>
<dbReference type="InterPro" id="IPR027417">
    <property type="entry name" value="P-loop_NTPase"/>
</dbReference>
<dbReference type="InterPro" id="IPR050905">
    <property type="entry name" value="Plant_NBS-LRR"/>
</dbReference>
<dbReference type="InterPro" id="IPR036388">
    <property type="entry name" value="WH-like_DNA-bd_sf"/>
</dbReference>
<dbReference type="PANTHER" id="PTHR33463:SF220">
    <property type="entry name" value="NB-ARC DOMAIN-CONTAINING PROTEIN"/>
    <property type="match status" value="1"/>
</dbReference>
<dbReference type="PANTHER" id="PTHR33463">
    <property type="entry name" value="NB-ARC DOMAIN-CONTAINING PROTEIN-RELATED"/>
    <property type="match status" value="1"/>
</dbReference>
<dbReference type="Pfam" id="PF23598">
    <property type="entry name" value="LRR_14"/>
    <property type="match status" value="1"/>
</dbReference>
<dbReference type="Pfam" id="PF00931">
    <property type="entry name" value="NB-ARC"/>
    <property type="match status" value="1"/>
</dbReference>
<dbReference type="Pfam" id="PF23559">
    <property type="entry name" value="WH_DRP"/>
    <property type="match status" value="1"/>
</dbReference>
<dbReference type="PRINTS" id="PR00364">
    <property type="entry name" value="DISEASERSIST"/>
</dbReference>
<dbReference type="SUPFAM" id="SSF52058">
    <property type="entry name" value="L domain-like"/>
    <property type="match status" value="1"/>
</dbReference>
<dbReference type="SUPFAM" id="SSF52540">
    <property type="entry name" value="P-loop containing nucleoside triphosphate hydrolases"/>
    <property type="match status" value="1"/>
</dbReference>
<accession>O82484</accession>
<protein>
    <recommendedName>
        <fullName>Putative disease resistance protein At4g10780</fullName>
    </recommendedName>
</protein>
<reference key="1">
    <citation type="journal article" date="1999" name="Nature">
        <title>Sequence and analysis of chromosome 4 of the plant Arabidopsis thaliana.</title>
        <authorList>
            <person name="Mayer K.F.X."/>
            <person name="Schueller C."/>
            <person name="Wambutt R."/>
            <person name="Murphy G."/>
            <person name="Volckaert G."/>
            <person name="Pohl T."/>
            <person name="Duesterhoeft A."/>
            <person name="Stiekema W."/>
            <person name="Entian K.-D."/>
            <person name="Terryn N."/>
            <person name="Harris B."/>
            <person name="Ansorge W."/>
            <person name="Brandt P."/>
            <person name="Grivell L.A."/>
            <person name="Rieger M."/>
            <person name="Weichselgartner M."/>
            <person name="de Simone V."/>
            <person name="Obermaier B."/>
            <person name="Mache R."/>
            <person name="Mueller M."/>
            <person name="Kreis M."/>
            <person name="Delseny M."/>
            <person name="Puigdomenech P."/>
            <person name="Watson M."/>
            <person name="Schmidtheini T."/>
            <person name="Reichert B."/>
            <person name="Portetelle D."/>
            <person name="Perez-Alonso M."/>
            <person name="Boutry M."/>
            <person name="Bancroft I."/>
            <person name="Vos P."/>
            <person name="Hoheisel J."/>
            <person name="Zimmermann W."/>
            <person name="Wedler H."/>
            <person name="Ridley P."/>
            <person name="Langham S.-A."/>
            <person name="McCullagh B."/>
            <person name="Bilham L."/>
            <person name="Robben J."/>
            <person name="van der Schueren J."/>
            <person name="Grymonprez B."/>
            <person name="Chuang Y.-J."/>
            <person name="Vandenbussche F."/>
            <person name="Braeken M."/>
            <person name="Weltjens I."/>
            <person name="Voet M."/>
            <person name="Bastiaens I."/>
            <person name="Aert R."/>
            <person name="Defoor E."/>
            <person name="Weitzenegger T."/>
            <person name="Bothe G."/>
            <person name="Ramsperger U."/>
            <person name="Hilbert H."/>
            <person name="Braun M."/>
            <person name="Holzer E."/>
            <person name="Brandt A."/>
            <person name="Peters S."/>
            <person name="van Staveren M."/>
            <person name="Dirkse W."/>
            <person name="Mooijman P."/>
            <person name="Klein Lankhorst R."/>
            <person name="Rose M."/>
            <person name="Hauf J."/>
            <person name="Koetter P."/>
            <person name="Berneiser S."/>
            <person name="Hempel S."/>
            <person name="Feldpausch M."/>
            <person name="Lamberth S."/>
            <person name="Van den Daele H."/>
            <person name="De Keyser A."/>
            <person name="Buysshaert C."/>
            <person name="Gielen J."/>
            <person name="Villarroel R."/>
            <person name="De Clercq R."/>
            <person name="van Montagu M."/>
            <person name="Rogers J."/>
            <person name="Cronin A."/>
            <person name="Quail M.A."/>
            <person name="Bray-Allen S."/>
            <person name="Clark L."/>
            <person name="Doggett J."/>
            <person name="Hall S."/>
            <person name="Kay M."/>
            <person name="Lennard N."/>
            <person name="McLay K."/>
            <person name="Mayes R."/>
            <person name="Pettett A."/>
            <person name="Rajandream M.A."/>
            <person name="Lyne M."/>
            <person name="Benes V."/>
            <person name="Rechmann S."/>
            <person name="Borkova D."/>
            <person name="Bloecker H."/>
            <person name="Scharfe M."/>
            <person name="Grimm M."/>
            <person name="Loehnert T.-H."/>
            <person name="Dose S."/>
            <person name="de Haan M."/>
            <person name="Maarse A.C."/>
            <person name="Schaefer M."/>
            <person name="Mueller-Auer S."/>
            <person name="Gabel C."/>
            <person name="Fuchs M."/>
            <person name="Fartmann B."/>
            <person name="Granderath K."/>
            <person name="Dauner D."/>
            <person name="Herzl A."/>
            <person name="Neumann S."/>
            <person name="Argiriou A."/>
            <person name="Vitale D."/>
            <person name="Liguori R."/>
            <person name="Piravandi E."/>
            <person name="Massenet O."/>
            <person name="Quigley F."/>
            <person name="Clabauld G."/>
            <person name="Muendlein A."/>
            <person name="Felber R."/>
            <person name="Schnabl S."/>
            <person name="Hiller R."/>
            <person name="Schmidt W."/>
            <person name="Lecharny A."/>
            <person name="Aubourg S."/>
            <person name="Chefdor F."/>
            <person name="Cooke R."/>
            <person name="Berger C."/>
            <person name="Monfort A."/>
            <person name="Casacuberta E."/>
            <person name="Gibbons T."/>
            <person name="Weber N."/>
            <person name="Vandenbol M."/>
            <person name="Bargues M."/>
            <person name="Terol J."/>
            <person name="Torres A."/>
            <person name="Perez-Perez A."/>
            <person name="Purnelle B."/>
            <person name="Bent E."/>
            <person name="Johnson S."/>
            <person name="Tacon D."/>
            <person name="Jesse T."/>
            <person name="Heijnen L."/>
            <person name="Schwarz S."/>
            <person name="Scholler P."/>
            <person name="Heber S."/>
            <person name="Francs P."/>
            <person name="Bielke C."/>
            <person name="Frishman D."/>
            <person name="Haase D."/>
            <person name="Lemcke K."/>
            <person name="Mewes H.-W."/>
            <person name="Stocker S."/>
            <person name="Zaccaria P."/>
            <person name="Bevan M."/>
            <person name="Wilson R.K."/>
            <person name="de la Bastide M."/>
            <person name="Habermann K."/>
            <person name="Parnell L."/>
            <person name="Dedhia N."/>
            <person name="Gnoj L."/>
            <person name="Schutz K."/>
            <person name="Huang E."/>
            <person name="Spiegel L."/>
            <person name="Sekhon M."/>
            <person name="Murray J."/>
            <person name="Sheet P."/>
            <person name="Cordes M."/>
            <person name="Abu-Threideh J."/>
            <person name="Stoneking T."/>
            <person name="Kalicki J."/>
            <person name="Graves T."/>
            <person name="Harmon G."/>
            <person name="Edwards J."/>
            <person name="Latreille P."/>
            <person name="Courtney L."/>
            <person name="Cloud J."/>
            <person name="Abbott A."/>
            <person name="Scott K."/>
            <person name="Johnson D."/>
            <person name="Minx P."/>
            <person name="Bentley D."/>
            <person name="Fulton B."/>
            <person name="Miller N."/>
            <person name="Greco T."/>
            <person name="Kemp K."/>
            <person name="Kramer J."/>
            <person name="Fulton L."/>
            <person name="Mardis E."/>
            <person name="Dante M."/>
            <person name="Pepin K."/>
            <person name="Hillier L.W."/>
            <person name="Nelson J."/>
            <person name="Spieth J."/>
            <person name="Ryan E."/>
            <person name="Andrews S."/>
            <person name="Geisel C."/>
            <person name="Layman D."/>
            <person name="Du H."/>
            <person name="Ali J."/>
            <person name="Berghoff A."/>
            <person name="Jones K."/>
            <person name="Drone K."/>
            <person name="Cotton M."/>
            <person name="Joshu C."/>
            <person name="Antonoiu B."/>
            <person name="Zidanic M."/>
            <person name="Strong C."/>
            <person name="Sun H."/>
            <person name="Lamar B."/>
            <person name="Yordan C."/>
            <person name="Ma P."/>
            <person name="Zhong J."/>
            <person name="Preston R."/>
            <person name="Vil D."/>
            <person name="Shekher M."/>
            <person name="Matero A."/>
            <person name="Shah R."/>
            <person name="Swaby I.K."/>
            <person name="O'Shaughnessy A."/>
            <person name="Rodriguez M."/>
            <person name="Hoffman J."/>
            <person name="Till S."/>
            <person name="Granat S."/>
            <person name="Shohdy N."/>
            <person name="Hasegawa A."/>
            <person name="Hameed A."/>
            <person name="Lodhi M."/>
            <person name="Johnson A."/>
            <person name="Chen E."/>
            <person name="Marra M.A."/>
            <person name="Martienssen R."/>
            <person name="McCombie W.R."/>
        </authorList>
    </citation>
    <scope>NUCLEOTIDE SEQUENCE [LARGE SCALE GENOMIC DNA]</scope>
    <source>
        <strain>cv. Columbia</strain>
    </source>
</reference>
<reference key="2">
    <citation type="journal article" date="2017" name="Plant J.">
        <title>Araport11: a complete reannotation of the Arabidopsis thaliana reference genome.</title>
        <authorList>
            <person name="Cheng C.Y."/>
            <person name="Krishnakumar V."/>
            <person name="Chan A.P."/>
            <person name="Thibaud-Nissen F."/>
            <person name="Schobel S."/>
            <person name="Town C.D."/>
        </authorList>
    </citation>
    <scope>GENOME REANNOTATION</scope>
    <source>
        <strain>cv. Columbia</strain>
    </source>
</reference>
<sequence length="892" mass="101802">MGSCISLQISCDQVLTRAYSCFFSLGNYIHKLKDNIVALEKAIEDLTATRDDVLRRVQMEEGKGLERLQQVQVWLKRVEIIRNQFYDLLSARNIEIQRLCFYSNCSTNLSSSYTYGQRVFLMIKEVENLNSNGFFEIVAAPAPKLEMRPIQPTIMGRETIFQRAWNRLMDDGVGTMGLYGMGGVGKTTLLTQIHNTLHDTKNGVDIVIWVVVSSDLQIHKIQEDIGEKLGFIGKEWNKKQESQKAVDILNCLSKKRFVLLLDDIWKKVDLTKIGIPSQTRENKCKVVFTTRSLDVCARMGVHDPMEVQCLSTNDAWELFQEKVGQISLGSHPDILELAKKVAGKCRGLPLALNVIGETMAGKRAVQEWHHAVDVLTSYAAEFSGMDDHILLILKYSYDNLNDKHVRSCFQYCALYPEDYSIKKYRLIDYWICEGFIDGNIGKERAVNQGYEILGTLVRACLLSEEGKNKLEVKMHDVVREMALWTLSDLGKNKERCIVQAGSGLRKVPKVEDWGAVRRLSLMNNGIEEISGSPECPELTTLFLQENKSLVHISGEFFRHMRKLVVLDLSENHQLDGLPEQISELVALRYLDLSHTNIEGLPACLQDLKTLIHLNLECMRRLGSIAGISKLSSLRTLGLRNSNIMLDVMSVKELHLLEHLEILTIDIVSTMVLEQMIDAGTLMNCMQEVSIRCLIYDQEQDTKLRLPTMDSLRSLTMWNCEISEIEIERLTWNTNPTSPCFFNLSQVIIHVCSSLKDLTWLLFAPNITYLMIEQLEQLQELISHAKATGVTEEEQQQLHKIIPFQKLQILHLSSLPELKSIYWISLSFPCLSGIYVERCPKLRKLPLDSKTGTVGKKFVLQYKETEWIESVEWKDEATKLHFLPSTKLVYILS</sequence>
<gene>
    <name type="ordered locus">At4g10780</name>
    <name type="ORF">T12H20.8</name>
</gene>
<proteinExistence type="inferred from homology"/>
<comment type="function">
    <text evidence="1">Potential disease resistance protein.</text>
</comment>
<comment type="domain">
    <text evidence="1">The LRR repeats probably act as specificity determinant of pathogen recognition.</text>
</comment>
<comment type="similarity">
    <text evidence="3">Belongs to the disease resistance NB-LRR family.</text>
</comment>
<comment type="online information" name="NIB-LRRS">
    <link uri="http://niblrrs.ucdavis.edu"/>
    <text>Functional and comparative genomics of disease resistance gene homologs</text>
</comment>